<accession>Q48325</accession>
<reference key="1">
    <citation type="journal article" date="1997" name="Eur. J. Biochem.">
        <title>The TATA-box-binding protein (TBP) of Halobacterium salinarum. Cloning of the tbp gene, heterologous production of TBP and folding of TBP into a native conformation.</title>
        <authorList>
            <person name="Soppa J."/>
            <person name="Link T.A."/>
        </authorList>
    </citation>
    <scope>NUCLEOTIDE SEQUENCE [GENOMIC DNA]</scope>
</reference>
<reference key="2">
    <citation type="journal article" date="1998" name="Genome Res.">
        <title>Snapshot of a large dynamic replicon in a halophilic archaeon: megaplasmid or minichromosome?</title>
        <authorList>
            <person name="Ng W.V."/>
            <person name="Ciufo S.A."/>
            <person name="Smith T.M."/>
            <person name="Bumgarner R.E."/>
            <person name="Baskin D."/>
            <person name="Faust J."/>
            <person name="Hall B."/>
            <person name="Loretz C."/>
            <person name="Seto J."/>
            <person name="Slagel J."/>
            <person name="Hood L."/>
            <person name="DasSarma S."/>
        </authorList>
    </citation>
    <scope>NUCLEOTIDE SEQUENCE [LARGE SCALE GENOMIC DNA]</scope>
    <source>
        <strain>ATCC 700922 / JCM 11081 / NRC-1</strain>
        <plasmid>pNRC100</plasmid>
    </source>
</reference>
<reference key="3">
    <citation type="journal article" date="2000" name="Proc. Natl. Acad. Sci. U.S.A.">
        <title>Genome sequence of Halobacterium species NRC-1.</title>
        <authorList>
            <person name="Ng W.V."/>
            <person name="Kennedy S.P."/>
            <person name="Mahairas G.G."/>
            <person name="Berquist B."/>
            <person name="Pan M."/>
            <person name="Shukla H.D."/>
            <person name="Lasky S.R."/>
            <person name="Baliga N.S."/>
            <person name="Thorsson V."/>
            <person name="Sbrogna J."/>
            <person name="Swartzell S."/>
            <person name="Weir D."/>
            <person name="Hall J."/>
            <person name="Dahl T.A."/>
            <person name="Welti R."/>
            <person name="Goo Y.A."/>
            <person name="Leithauser B."/>
            <person name="Keller K."/>
            <person name="Cruz R."/>
            <person name="Danson M.J."/>
            <person name="Hough D.W."/>
            <person name="Maddocks D.G."/>
            <person name="Jablonski P.E."/>
            <person name="Krebs M.P."/>
            <person name="Angevine C.M."/>
            <person name="Dale H."/>
            <person name="Isenbarger T.A."/>
            <person name="Peck R.F."/>
            <person name="Pohlschroder M."/>
            <person name="Spudich J.L."/>
            <person name="Jung K.-H."/>
            <person name="Alam M."/>
            <person name="Freitas T."/>
            <person name="Hou S."/>
            <person name="Daniels C.J."/>
            <person name="Dennis P.P."/>
            <person name="Omer A.D."/>
            <person name="Ebhardt H."/>
            <person name="Lowe T.M."/>
            <person name="Liang P."/>
            <person name="Riley M."/>
            <person name="Hood L."/>
            <person name="DasSarma S."/>
        </authorList>
    </citation>
    <scope>NUCLEOTIDE SEQUENCE [LARGE SCALE GENOMIC DNA]</scope>
    <source>
        <strain>ATCC 700922 / JCM 11081 / NRC-1</strain>
        <plasmid>pNRC200</plasmid>
    </source>
</reference>
<keyword id="KW-0238">DNA-binding</keyword>
<keyword id="KW-0614">Plasmid</keyword>
<keyword id="KW-1185">Reference proteome</keyword>
<keyword id="KW-0677">Repeat</keyword>
<keyword id="KW-0804">Transcription</keyword>
<keyword id="KW-0805">Transcription regulation</keyword>
<dbReference type="EMBL" id="X93206">
    <property type="protein sequence ID" value="CAA63691.1"/>
    <property type="molecule type" value="Genomic_DNA"/>
</dbReference>
<dbReference type="EMBL" id="AF016485">
    <property type="protein sequence ID" value="AAC82955.1"/>
    <property type="molecule type" value="Genomic_DNA"/>
</dbReference>
<dbReference type="EMBL" id="AF016485">
    <property type="protein sequence ID" value="AAC82822.1"/>
    <property type="molecule type" value="Genomic_DNA"/>
</dbReference>
<dbReference type="EMBL" id="AE004438">
    <property type="protein sequence ID" value="AAG21065.1"/>
    <property type="molecule type" value="Genomic_DNA"/>
</dbReference>
<dbReference type="EMBL" id="AE004438">
    <property type="protein sequence ID" value="AAG20743.1"/>
    <property type="molecule type" value="Genomic_DNA"/>
</dbReference>
<dbReference type="PIR" id="T08255">
    <property type="entry name" value="T08255"/>
</dbReference>
<dbReference type="PIR" id="T44922">
    <property type="entry name" value="T44922"/>
</dbReference>
<dbReference type="RefSeq" id="WP_010890411.1">
    <property type="nucleotide sequence ID" value="NC_001869.1"/>
</dbReference>
<dbReference type="SMR" id="Q48325"/>
<dbReference type="FunCoup" id="Q48325">
    <property type="interactions" value="128"/>
</dbReference>
<dbReference type="GeneID" id="1449440"/>
<dbReference type="KEGG" id="hal:AAC82955.1"/>
<dbReference type="KEGG" id="hal:tbpB"/>
<dbReference type="KEGG" id="hal:VNG_6050G"/>
<dbReference type="KEGG" id="hal:VNG_6476G"/>
<dbReference type="PATRIC" id="fig|64091.14.peg.2115"/>
<dbReference type="HOGENOM" id="CLU_060161_4_3_2"/>
<dbReference type="InParanoid" id="Q48325"/>
<dbReference type="OrthoDB" id="350539at2157"/>
<dbReference type="Proteomes" id="UP000000554">
    <property type="component" value="Plasmid pNRC100"/>
</dbReference>
<dbReference type="Proteomes" id="UP000000554">
    <property type="component" value="Plasmid pNRC200"/>
</dbReference>
<dbReference type="GO" id="GO:0003677">
    <property type="term" value="F:DNA binding"/>
    <property type="evidence" value="ECO:0007669"/>
    <property type="project" value="UniProtKB-KW"/>
</dbReference>
<dbReference type="GO" id="GO:0003700">
    <property type="term" value="F:DNA-binding transcription factor activity"/>
    <property type="evidence" value="ECO:0007669"/>
    <property type="project" value="UniProtKB-UniRule"/>
</dbReference>
<dbReference type="GO" id="GO:0140223">
    <property type="term" value="F:general transcription initiation factor activity"/>
    <property type="evidence" value="ECO:0000318"/>
    <property type="project" value="GO_Central"/>
</dbReference>
<dbReference type="GO" id="GO:0006352">
    <property type="term" value="P:DNA-templated transcription initiation"/>
    <property type="evidence" value="ECO:0000318"/>
    <property type="project" value="GO_Central"/>
</dbReference>
<dbReference type="CDD" id="cd04518">
    <property type="entry name" value="TBP_archaea"/>
    <property type="match status" value="1"/>
</dbReference>
<dbReference type="FunFam" id="3.30.310.10:FF:000007">
    <property type="entry name" value="TATA-box-binding protein"/>
    <property type="match status" value="1"/>
</dbReference>
<dbReference type="FunFam" id="3.30.310.10:FF:000010">
    <property type="entry name" value="TATA-box-binding protein"/>
    <property type="match status" value="1"/>
</dbReference>
<dbReference type="Gene3D" id="3.30.310.10">
    <property type="entry name" value="TATA-Binding Protein"/>
    <property type="match status" value="2"/>
</dbReference>
<dbReference type="HAMAP" id="MF_00408">
    <property type="entry name" value="TATA_bind_prot_arch"/>
    <property type="match status" value="1"/>
</dbReference>
<dbReference type="InterPro" id="IPR000814">
    <property type="entry name" value="TBP"/>
</dbReference>
<dbReference type="InterPro" id="IPR033711">
    <property type="entry name" value="TBP_archaea"/>
</dbReference>
<dbReference type="InterPro" id="IPR030491">
    <property type="entry name" value="TBP_CS"/>
</dbReference>
<dbReference type="InterPro" id="IPR012295">
    <property type="entry name" value="TBP_dom_sf"/>
</dbReference>
<dbReference type="NCBIfam" id="NF001593">
    <property type="entry name" value="PRK00394.1-2"/>
    <property type="match status" value="1"/>
</dbReference>
<dbReference type="NCBIfam" id="NF001595">
    <property type="entry name" value="PRK00394.1-5"/>
    <property type="match status" value="1"/>
</dbReference>
<dbReference type="NCBIfam" id="NF001597">
    <property type="entry name" value="PRK00394.2-2"/>
    <property type="match status" value="1"/>
</dbReference>
<dbReference type="PANTHER" id="PTHR10126">
    <property type="entry name" value="TATA-BOX BINDING PROTEIN"/>
    <property type="match status" value="1"/>
</dbReference>
<dbReference type="Pfam" id="PF00352">
    <property type="entry name" value="TBP"/>
    <property type="match status" value="2"/>
</dbReference>
<dbReference type="PRINTS" id="PR00686">
    <property type="entry name" value="TIFACTORIID"/>
</dbReference>
<dbReference type="SUPFAM" id="SSF55945">
    <property type="entry name" value="TATA-box binding protein-like"/>
    <property type="match status" value="2"/>
</dbReference>
<dbReference type="PROSITE" id="PS00351">
    <property type="entry name" value="TFIID"/>
    <property type="match status" value="1"/>
</dbReference>
<gene>
    <name type="primary">tbpB1</name>
    <name type="ordered locus">VNG_5052G</name>
</gene>
<gene>
    <name type="primary">tbpB2</name>
    <name type="ordered locus">VNG_5245G</name>
</gene>
<gene>
    <name type="primary">tbpB3</name>
    <name type="ordered locus">VNG_6050G</name>
</gene>
<gene>
    <name type="primary">tbpB4</name>
    <name type="ordered locus">VNG_6476G</name>
</gene>
<evidence type="ECO:0000250" key="1"/>
<evidence type="ECO:0000305" key="2"/>
<geneLocation type="plasmid">
    <name>pNRC100</name>
</geneLocation>
<geneLocation type="plasmid">
    <name>pNRC200</name>
</geneLocation>
<protein>
    <recommendedName>
        <fullName>TATA-box-binding protein B</fullName>
    </recommendedName>
    <alternativeName>
        <fullName>Box A-binding protein B</fullName>
        <shortName>BAP B</shortName>
    </alternativeName>
    <alternativeName>
        <fullName>TATA sequence-binding protein B</fullName>
        <shortName>TBP B</shortName>
    </alternativeName>
    <alternativeName>
        <fullName>TATA-box factor B</fullName>
    </alternativeName>
</protein>
<feature type="chain" id="PRO_0000154000" description="TATA-box-binding protein B">
    <location>
        <begin position="1"/>
        <end position="186"/>
    </location>
</feature>
<feature type="repeat" description="1">
    <location>
        <begin position="10"/>
        <end position="86"/>
    </location>
</feature>
<feature type="repeat" description="2">
    <location>
        <begin position="101"/>
        <end position="179"/>
    </location>
</feature>
<sequence>MSTLADTIHIENVVASSDLGQELALDQLSTDLPGAEYNPEDFPGVVYRLQEPKSATLIFRSGKVVCTGAKSVDDVHEALGIVFGDIRELGIDVTSNPPIEVQNIVSSASLEQSLNLNAIAIGLGLEQIEYEPEQFPGLVYRLDDPDVVVLLFGSGKLVITGGQNPDEAEQALAHVQDRLTELGLLD</sequence>
<comment type="function">
    <text evidence="1">General factor that plays a role in the activation of archaeal genes transcribed by RNA polymerase. Binds specifically to the TATA box promoter element which lies close to the position of transcription initiation (By similarity).</text>
</comment>
<comment type="similarity">
    <text evidence="2">Belongs to the TBP family.</text>
</comment>
<proteinExistence type="inferred from homology"/>
<name>TBPB_HALSA</name>
<organism>
    <name type="scientific">Halobacterium salinarum (strain ATCC 700922 / JCM 11081 / NRC-1)</name>
    <name type="common">Halobacterium halobium</name>
    <dbReference type="NCBI Taxonomy" id="64091"/>
    <lineage>
        <taxon>Archaea</taxon>
        <taxon>Methanobacteriati</taxon>
        <taxon>Methanobacteriota</taxon>
        <taxon>Stenosarchaea group</taxon>
        <taxon>Halobacteria</taxon>
        <taxon>Halobacteriales</taxon>
        <taxon>Halobacteriaceae</taxon>
        <taxon>Halobacterium</taxon>
        <taxon>Halobacterium salinarum NRC-34001</taxon>
    </lineage>
</organism>